<reference evidence="12" key="1">
    <citation type="journal article" date="2002" name="Science">
        <title>The genome sequence of the malaria mosquito Anopheles gambiae.</title>
        <authorList>
            <person name="Holt R.A."/>
            <person name="Subramanian G.M."/>
            <person name="Halpern A."/>
            <person name="Sutton G.G."/>
            <person name="Charlab R."/>
            <person name="Nusskern D.R."/>
            <person name="Wincker P."/>
            <person name="Clark A.G."/>
            <person name="Ribeiro J.M.C."/>
            <person name="Wides R."/>
            <person name="Salzberg S.L."/>
            <person name="Loftus B.J."/>
            <person name="Yandell M.D."/>
            <person name="Majoros W.H."/>
            <person name="Rusch D.B."/>
            <person name="Lai Z."/>
            <person name="Kraft C.L."/>
            <person name="Abril J.F."/>
            <person name="Anthouard V."/>
            <person name="Arensburger P."/>
            <person name="Atkinson P.W."/>
            <person name="Baden H."/>
            <person name="de Berardinis V."/>
            <person name="Baldwin D."/>
            <person name="Benes V."/>
            <person name="Biedler J."/>
            <person name="Blass C."/>
            <person name="Bolanos R."/>
            <person name="Boscus D."/>
            <person name="Barnstead M."/>
            <person name="Cai S."/>
            <person name="Center A."/>
            <person name="Chaturverdi K."/>
            <person name="Christophides G.K."/>
            <person name="Chrystal M.A.M."/>
            <person name="Clamp M."/>
            <person name="Cravchik A."/>
            <person name="Curwen V."/>
            <person name="Dana A."/>
            <person name="Delcher A."/>
            <person name="Dew I."/>
            <person name="Evans C.A."/>
            <person name="Flanigan M."/>
            <person name="Grundschober-Freimoser A."/>
            <person name="Friedli L."/>
            <person name="Gu Z."/>
            <person name="Guan P."/>
            <person name="Guigo R."/>
            <person name="Hillenmeyer M.E."/>
            <person name="Hladun S.L."/>
            <person name="Hogan J.R."/>
            <person name="Hong Y.S."/>
            <person name="Hoover J."/>
            <person name="Jaillon O."/>
            <person name="Ke Z."/>
            <person name="Kodira C.D."/>
            <person name="Kokoza E."/>
            <person name="Koutsos A."/>
            <person name="Letunic I."/>
            <person name="Levitsky A.A."/>
            <person name="Liang Y."/>
            <person name="Lin J.-J."/>
            <person name="Lobo N.F."/>
            <person name="Lopez J.R."/>
            <person name="Malek J.A."/>
            <person name="McIntosh T.C."/>
            <person name="Meister S."/>
            <person name="Miller J.R."/>
            <person name="Mobarry C."/>
            <person name="Mongin E."/>
            <person name="Murphy S.D."/>
            <person name="O'Brochta D.A."/>
            <person name="Pfannkoch C."/>
            <person name="Qi R."/>
            <person name="Regier M.A."/>
            <person name="Remington K."/>
            <person name="Shao H."/>
            <person name="Sharakhova M.V."/>
            <person name="Sitter C.D."/>
            <person name="Shetty J."/>
            <person name="Smith T.J."/>
            <person name="Strong R."/>
            <person name="Sun J."/>
            <person name="Thomasova D."/>
            <person name="Ton L.Q."/>
            <person name="Topalis P."/>
            <person name="Tu Z.J."/>
            <person name="Unger M.F."/>
            <person name="Walenz B."/>
            <person name="Wang A.H."/>
            <person name="Wang J."/>
            <person name="Wang M."/>
            <person name="Wang X."/>
            <person name="Woodford K.J."/>
            <person name="Wortman J.R."/>
            <person name="Wu M."/>
            <person name="Yao A."/>
            <person name="Zdobnov E.M."/>
            <person name="Zhang H."/>
            <person name="Zhao Q."/>
            <person name="Zhao S."/>
            <person name="Zhu S.C."/>
            <person name="Zhimulev I."/>
            <person name="Coluzzi M."/>
            <person name="della Torre A."/>
            <person name="Roth C.W."/>
            <person name="Louis C."/>
            <person name="Kalush F."/>
            <person name="Mural R.J."/>
            <person name="Myers E.W."/>
            <person name="Adams M.D."/>
            <person name="Smith H.O."/>
            <person name="Broder S."/>
            <person name="Gardner M.J."/>
            <person name="Fraser C.M."/>
            <person name="Birney E."/>
            <person name="Bork P."/>
            <person name="Brey P.T."/>
            <person name="Venter J.C."/>
            <person name="Weissenbach J."/>
            <person name="Kafatos F.C."/>
            <person name="Collins F.H."/>
            <person name="Hoffman S.L."/>
        </authorList>
    </citation>
    <scope>NUCLEOTIDE SEQUENCE [LARGE SCALE GENOMIC DNA]</scope>
    <source>
        <strain evidence="12">PEST</strain>
    </source>
</reference>
<reference evidence="10" key="2">
    <citation type="journal article" date="2018" name="Nat. Commun.">
        <title>A mosquito salivary gland protein partially inhibits Plasmodium sporozoite cell traversal and transmission.</title>
        <authorList>
            <person name="Schleicher T.R."/>
            <person name="Yang J."/>
            <person name="Freudzon M."/>
            <person name="Rembisz A."/>
            <person name="Craft S."/>
            <person name="Hamilton M."/>
            <person name="Graham M."/>
            <person name="Mlambo G."/>
            <person name="Tripathi A.K."/>
            <person name="Li Y."/>
            <person name="Cresswell P."/>
            <person name="Sinnis P."/>
            <person name="Dimopoulos G."/>
            <person name="Fikrig E."/>
        </authorList>
    </citation>
    <scope>IDENTIFICATION BY MASS SPECTROMETRY</scope>
    <scope>FUNCTION (MICROBIAL INFECTION)</scope>
    <scope>TISSUE SPECIFICITY</scope>
    <scope>TISSUE SPECIFICITY (MICROBIAL INFECTION)</scope>
    <scope>INDUCTION (MICROBIAL INFECTION)</scope>
    <scope>DISRUPTION PHENOTYPE (MICROBIAL INFECTION)</scope>
    <scope>MUTAGENESIS OF CYS-32</scope>
</reference>
<reference key="3">
    <citation type="journal article" date="2020" name="J. Exp. Med.">
        <title>Disruption of mosGILT in Anopheles gambiae impairs ovarian development and Plasmodium infection.</title>
        <authorList>
            <person name="Yang J."/>
            <person name="Schleicher T.R."/>
            <person name="Dong Y."/>
            <person name="Park H.B."/>
            <person name="Lan J."/>
            <person name="Cresswell P."/>
            <person name="Crawford J."/>
            <person name="Dimopoulos G."/>
            <person name="Fikrig E."/>
        </authorList>
    </citation>
    <scope>FUNCTION</scope>
    <scope>FUNCTION (MICROBIAL INFECTION)</scope>
    <scope>DEVELOPMENTAL STAGE</scope>
    <scope>DISRUPTION PHENOTYPE</scope>
    <scope>DISRUPTION PHENOTYPE (MICROBIAL INFECTION)</scope>
</reference>
<reference key="4">
    <citation type="journal article" date="2024" name="BMC Genomics">
        <title>mosGILT controls innate immunity and germ cell development in Anopheles gambiae.</title>
        <authorList>
            <person name="Arora G."/>
            <person name="Tang X."/>
            <person name="Cui Y."/>
            <person name="Yang J."/>
            <person name="Chuang Y.M."/>
            <person name="Joshi J."/>
            <person name="Sajid A."/>
            <person name="Dong Y."/>
            <person name="Cresswell P."/>
            <person name="Dimopoulos G."/>
            <person name="Fikrig E."/>
        </authorList>
    </citation>
    <scope>DISRUPTION PHENOTYPE</scope>
</reference>
<reference key="5">
    <citation type="journal article" date="2025" name="Nat. Commun.">
        <title>mosGILT antibodies interfere with Plasmodium sporogony in Anopheles gambiae.</title>
        <authorList>
            <person name="Dolan B."/>
            <person name="Correa Gaviria T."/>
            <person name="Dong Y."/>
            <person name="Cresswell P."/>
            <person name="Dimopoulos G."/>
            <person name="Chuang Y.M."/>
            <person name="Fikrig E."/>
        </authorList>
    </citation>
    <scope>FUNCTION (MICROBIAL INFECTION)</scope>
    <scope>TISSUE SPECIFICITY</scope>
    <scope>INDUCTION BY BLOOD FEEDING</scope>
</reference>
<protein>
    <recommendedName>
        <fullName evidence="8">Gamma-interferon-inducible lysosomal thiol reductase-like protein</fullName>
    </recommendedName>
    <alternativeName>
        <fullName evidence="9">Gamma-interferon-inducible lysosomal thiol reductase</fullName>
    </alternativeName>
    <alternativeName>
        <fullName evidence="7">Mosquito GILT protein</fullName>
        <shortName evidence="7 8 9">mosGILT</shortName>
    </alternativeName>
</protein>
<accession>Q7PQD1</accession>
<keyword id="KW-0325">Glycoprotein</keyword>
<keyword id="KW-0472">Membrane</keyword>
<keyword id="KW-1185">Reference proteome</keyword>
<keyword id="KW-0732">Signal</keyword>
<keyword id="KW-0812">Transmembrane</keyword>
<keyword id="KW-1133">Transmembrane helix</keyword>
<organism evidence="11">
    <name type="scientific">Anopheles gambiae</name>
    <name type="common">African malaria mosquito</name>
    <dbReference type="NCBI Taxonomy" id="7165"/>
    <lineage>
        <taxon>Eukaryota</taxon>
        <taxon>Metazoa</taxon>
        <taxon>Ecdysozoa</taxon>
        <taxon>Arthropoda</taxon>
        <taxon>Hexapoda</taxon>
        <taxon>Insecta</taxon>
        <taxon>Pterygota</taxon>
        <taxon>Neoptera</taxon>
        <taxon>Endopterygota</taxon>
        <taxon>Diptera</taxon>
        <taxon>Nematocera</taxon>
        <taxon>Culicoidea</taxon>
        <taxon>Culicidae</taxon>
        <taxon>Anophelinae</taxon>
        <taxon>Anopheles</taxon>
    </lineage>
</organism>
<proteinExistence type="evidence at protein level"/>
<sequence length="241" mass="26828">MLFKSLLLLSVYAVTCYGQSKVPVYVYYESLCPDSARFINEQLYPVAKELKKNLELHLVPFGKSSYTTQGSDVMFTCHHGENECYGNKVHACAIQHIQGNSYQPNISKEDLTLDYVNCLMHRAQLKDGAFPTKRCADEVKIDQWQAIMDCANSTEGSQLLKQHGDVTNKLQSPLKSVPTVAFKQTYDDELQKLSVSSFRHALCKNLSPQPVECLDLPSTGSAISSLGMIVTVVAVLISRLL</sequence>
<comment type="function">
    <text evidence="4">Required for normal development of ovary and testis.</text>
</comment>
<comment type="function">
    <text evidence="3 4 6">(Microbial infection) Interacts with the surface of Plasmodium berghei sporozoites (PubMed:30046053). Reduces P.berghei sporozoite cell traversal activity and transmission (PubMed:30046053). Limits the motility of P.berghei sporozoites (PubMed:30046053). Decreases the levels of host liver infection by P.berghei sporozoites (PubMed:30046053). Does not affect P.berghei sporozoite viability (PubMed:30046053). Indirectly promotes P.berghei survival in mosquitoes by influencing ovarian development and the subsequent production of 20-hydroxyecdysone and vitellogenin, which, in turn, modulates TEP1-dependent parasite killing (PubMed:31658986). Promotes P.berghei infection in mosquitoes, most likely impacting the oocyst stage of parasite development.</text>
</comment>
<comment type="function">
    <text evidence="4 6">(Microbial infection) Promotes Plasmodium falciparum survival in mosquitoes.</text>
</comment>
<comment type="subcellular location">
    <subcellularLocation>
        <location evidence="1">Membrane</location>
        <topology evidence="1">Single-pass membrane protein</topology>
    </subcellularLocation>
</comment>
<comment type="tissue specificity">
    <text evidence="3 4 6">Salivary gland (at protein level) (PubMed:30046053, PubMed:39799117). Low-level expression in midgut (at protein level) (PubMed:30046053, PubMed:39799117). Expressed in head and leg tissues (PubMed:30046053). Ovary (PubMed:31658986). Fat body (PubMed:31658986).</text>
</comment>
<comment type="tissue specificity">
    <text evidence="3">(Microbial infection) Detected with Plasmodium berghei sporozoites isolated from the saliva of infected Anopheles gambiae mosquitoes (at protein level).</text>
</comment>
<comment type="developmental stage">
    <text evidence="4">Expressed in larvae, pupae and adult mosquitoes.</text>
</comment>
<comment type="induction">
    <text evidence="6">Up-regulated in midgut in response to a blood meal.</text>
</comment>
<comment type="induction">
    <text evidence="3">(Microbial infection) Infection of salivary gland with Plasmodium berghei does not affect expression.</text>
</comment>
<comment type="disruption phenotype">
    <text evidence="4 5">Attempts to generate homozygous knockout mosquitoes were unsuccessful, since gene disruption interferes with both male and female mosquito reproductive biology (PubMed:31658986). Partial knockdown results in severe defects in reproductive system development (PubMed:31658986). Underdeveloped ovaries (PubMed:31658986). No yolk accumulation and oocyte development after blood feeding (PubMed:31658986). Developmental defects in testis (PubMed:31658986). No significant effects on male accessory gland development (PubMed:31658986). Altered expression of genes involved in oogenesis, 20-hydroxyecdysone synthesis and immune responses (PubMed:38191283). Reduced expression of ZPG gene, a regulator of germ cell development (PubMed:38191283).</text>
</comment>
<comment type="disruption phenotype">
    <text evidence="3 4">(Microbial infection) RNAi-mediated knockdown causes a slight increase in cell traversal activity of Plasmodium berghei parasites (PubMed:30046053). Partial knockdown results in significant reduction in oocyst numbers at 8 days post-infection with P.berghei parasites (PubMed:31658986). Reduced midgut infection prevalence (the percentage of infected midguts with at least one oocyst) with P.berghei parasites (PubMed:31658986). Reduced salivary gland infection prevalence (the percentage of infected salivary glands with at least one oocyst) with P.berghei parasites (PubMed:31658986). Reduced levels of 20-hydroxyecdysone after infectious blood meal (PubMed:31658986). Reduced vitellogenin levels after infectious blood meal (PubMed:31658986). Increased TEP1-dependent P.berghei parasite killing (PubMed:31658986).</text>
</comment>
<comment type="disruption phenotype">
    <text evidence="4">(Microbial infection) Partial knockdown results in significant reduction in oocyst numbers after infection with Plasmodium falciparum parasites (PubMed:31658986). Reduced midgut infection prevalence with P.falciparum parasites (PubMed:31658986). Reduced salivary gland infection prevalence with P.falciparum parasites (PubMed:31658986).</text>
</comment>
<comment type="miscellaneous">
    <text evidence="3 6">While mosGILT is an abundant protein in Anopheles gambiae salivary glands, it does not appear to be present at detectable levels as a soluble component of saliva, suggesting that the interaction between mosGILT and Plasmodium parasites potentially begins at some point in the salivary glands and then allows the protein to travel in association with the sporozoites into the mammalian host (PubMed:30046053). Antibodies against the protein added to the blood supplemented with Plasmodium falciparum or Plasmodium berghei gametocytes reduce Plasmodium infection in mosquitoes, measured as oocyst infection intensity and infection prevalence, in a membrane-based blood feeding model (PubMed:39799117). Injection of antibodies against the protein into mice reduces P.berghei infection in mosquitoes that feed on the infected animals (PubMed:39799117). Active immunization of mice against the protein reduces P.berghei infection in mosquitoes that feed on the infected animals (PubMed:39799117).</text>
</comment>
<comment type="similarity">
    <text evidence="10">Belongs to the GILT family.</text>
</comment>
<comment type="caution">
    <text evidence="3">Purified recombinant mosGILT does not show any detectable thiol reducing activity at pH 4.5.</text>
</comment>
<evidence type="ECO:0000255" key="1"/>
<evidence type="ECO:0000255" key="2">
    <source>
        <dbReference type="PROSITE-ProRule" id="PRU00498"/>
    </source>
</evidence>
<evidence type="ECO:0000269" key="3">
    <source>
    </source>
</evidence>
<evidence type="ECO:0000269" key="4">
    <source>
    </source>
</evidence>
<evidence type="ECO:0000269" key="5">
    <source>
    </source>
</evidence>
<evidence type="ECO:0000269" key="6">
    <source>
    </source>
</evidence>
<evidence type="ECO:0000303" key="7">
    <source>
    </source>
</evidence>
<evidence type="ECO:0000303" key="8">
    <source>
    </source>
</evidence>
<evidence type="ECO:0000303" key="9">
    <source>
    </source>
</evidence>
<evidence type="ECO:0000305" key="10"/>
<evidence type="ECO:0000312" key="11">
    <source>
        <dbReference type="EMBL" id="EAA09023.3"/>
    </source>
</evidence>
<evidence type="ECO:0000312" key="12">
    <source>
        <dbReference type="Proteomes" id="UP000007062"/>
    </source>
</evidence>
<gene>
    <name evidence="11" type="ORF">AgaP_AGAP004551</name>
</gene>
<dbReference type="EMBL" id="AAAB01008898">
    <property type="protein sequence ID" value="EAA09023.3"/>
    <property type="molecule type" value="Genomic_DNA"/>
</dbReference>
<dbReference type="RefSeq" id="XP_313849.2">
    <property type="nucleotide sequence ID" value="XM_313849.4"/>
</dbReference>
<dbReference type="SMR" id="Q7PQD1"/>
<dbReference type="FunCoup" id="Q7PQD1">
    <property type="interactions" value="218"/>
</dbReference>
<dbReference type="PaxDb" id="7165-AGAP004551-PA"/>
<dbReference type="EnsemblMetazoa" id="AGAP004551-RA">
    <property type="protein sequence ID" value="AGAP004551-PA"/>
    <property type="gene ID" value="AGAP004551"/>
</dbReference>
<dbReference type="KEGG" id="aga:1274692"/>
<dbReference type="CTD" id="41650"/>
<dbReference type="VEuPathDB" id="VectorBase:AGAMI1_001994"/>
<dbReference type="VEuPathDB" id="VectorBase:AGAP004551"/>
<dbReference type="eggNOG" id="KOG3160">
    <property type="taxonomic scope" value="Eukaryota"/>
</dbReference>
<dbReference type="HOGENOM" id="CLU_066886_2_2_1"/>
<dbReference type="InParanoid" id="Q7PQD1"/>
<dbReference type="OMA" id="VNNWENI"/>
<dbReference type="Proteomes" id="UP000007062">
    <property type="component" value="Chromosome 2R"/>
</dbReference>
<dbReference type="GO" id="GO:0016020">
    <property type="term" value="C:membrane"/>
    <property type="evidence" value="ECO:0007669"/>
    <property type="project" value="UniProtKB-SubCell"/>
</dbReference>
<dbReference type="GO" id="GO:0016491">
    <property type="term" value="F:oxidoreductase activity"/>
    <property type="evidence" value="ECO:0000318"/>
    <property type="project" value="GO_Central"/>
</dbReference>
<dbReference type="GO" id="GO:0016671">
    <property type="term" value="F:oxidoreductase activity, acting on a sulfur group of donors, disulfide as acceptor"/>
    <property type="evidence" value="ECO:0007669"/>
    <property type="project" value="InterPro"/>
</dbReference>
<dbReference type="Gene3D" id="3.40.30.10">
    <property type="entry name" value="Glutaredoxin"/>
    <property type="match status" value="1"/>
</dbReference>
<dbReference type="InterPro" id="IPR004911">
    <property type="entry name" value="Interferon-induced_GILT"/>
</dbReference>
<dbReference type="PANTHER" id="PTHR13234">
    <property type="entry name" value="GAMMA-INTERFERON INDUCIBLE LYSOSOMAL THIOL REDUCTASE GILT"/>
    <property type="match status" value="1"/>
</dbReference>
<dbReference type="PANTHER" id="PTHR13234:SF69">
    <property type="entry name" value="GILT-LIKE PROTEIN 1"/>
    <property type="match status" value="1"/>
</dbReference>
<dbReference type="Pfam" id="PF03227">
    <property type="entry name" value="GILT"/>
    <property type="match status" value="1"/>
</dbReference>
<name>GILT_ANOGA</name>
<feature type="signal peptide" evidence="1">
    <location>
        <begin position="1"/>
        <end position="18"/>
    </location>
</feature>
<feature type="chain" id="PRO_5014587840" description="Gamma-interferon-inducible lysosomal thiol reductase-like protein" evidence="1">
    <location>
        <begin position="19"/>
        <end position="241"/>
    </location>
</feature>
<feature type="transmembrane region" description="Helical" evidence="1">
    <location>
        <begin position="218"/>
        <end position="235"/>
    </location>
</feature>
<feature type="glycosylation site" description="N-linked (GlcNAc...) asparagine" evidence="2">
    <location>
        <position position="105"/>
    </location>
</feature>
<feature type="glycosylation site" description="N-linked (GlcNAc...) asparagine" evidence="2">
    <location>
        <position position="152"/>
    </location>
</feature>
<feature type="mutagenesis site" description="No significant effects on the ability of the protein to inhibit cell traversal activity of Plasmodium berghei parasites." evidence="3">
    <original>C</original>
    <variation>S</variation>
    <location>
        <position position="32"/>
    </location>
</feature>